<organism>
    <name type="scientific">Bacillus cereus (strain B4264)</name>
    <dbReference type="NCBI Taxonomy" id="405532"/>
    <lineage>
        <taxon>Bacteria</taxon>
        <taxon>Bacillati</taxon>
        <taxon>Bacillota</taxon>
        <taxon>Bacilli</taxon>
        <taxon>Bacillales</taxon>
        <taxon>Bacillaceae</taxon>
        <taxon>Bacillus</taxon>
        <taxon>Bacillus cereus group</taxon>
    </lineage>
</organism>
<gene>
    <name evidence="1" type="primary">gcvPA</name>
    <name type="ordered locus">BCB4264_A4338</name>
</gene>
<keyword id="KW-0560">Oxidoreductase</keyword>
<comment type="function">
    <text evidence="1">The glycine cleavage system catalyzes the degradation of glycine. The P protein binds the alpha-amino group of glycine through its pyridoxal phosphate cofactor; CO(2) is released and the remaining methylamine moiety is then transferred to the lipoamide cofactor of the H protein.</text>
</comment>
<comment type="catalytic activity">
    <reaction evidence="1">
        <text>N(6)-[(R)-lipoyl]-L-lysyl-[glycine-cleavage complex H protein] + glycine + H(+) = N(6)-[(R)-S(8)-aminomethyldihydrolipoyl]-L-lysyl-[glycine-cleavage complex H protein] + CO2</text>
        <dbReference type="Rhea" id="RHEA:24304"/>
        <dbReference type="Rhea" id="RHEA-COMP:10494"/>
        <dbReference type="Rhea" id="RHEA-COMP:10495"/>
        <dbReference type="ChEBI" id="CHEBI:15378"/>
        <dbReference type="ChEBI" id="CHEBI:16526"/>
        <dbReference type="ChEBI" id="CHEBI:57305"/>
        <dbReference type="ChEBI" id="CHEBI:83099"/>
        <dbReference type="ChEBI" id="CHEBI:83143"/>
        <dbReference type="EC" id="1.4.4.2"/>
    </reaction>
</comment>
<comment type="subunit">
    <text evidence="1">The glycine cleavage system is composed of four proteins: P, T, L and H. In this organism, the P 'protein' is a heterodimer of two subunits.</text>
</comment>
<comment type="similarity">
    <text evidence="1">Belongs to the GcvP family. N-terminal subunit subfamily.</text>
</comment>
<feature type="chain" id="PRO_1000132469" description="Probable glycine dehydrogenase (decarboxylating) subunit 1">
    <location>
        <begin position="1"/>
        <end position="447"/>
    </location>
</feature>
<proteinExistence type="inferred from homology"/>
<reference key="1">
    <citation type="submission" date="2008-10" db="EMBL/GenBank/DDBJ databases">
        <title>Genome sequence of Bacillus cereus B4264.</title>
        <authorList>
            <person name="Dodson R.J."/>
            <person name="Durkin A.S."/>
            <person name="Rosovitz M.J."/>
            <person name="Rasko D.A."/>
            <person name="Hoffmaster A."/>
            <person name="Ravel J."/>
            <person name="Sutton G."/>
        </authorList>
    </citation>
    <scope>NUCLEOTIDE SEQUENCE [LARGE SCALE GENOMIC DNA]</scope>
    <source>
        <strain>B4264</strain>
    </source>
</reference>
<evidence type="ECO:0000255" key="1">
    <source>
        <dbReference type="HAMAP-Rule" id="MF_00712"/>
    </source>
</evidence>
<sequence>MLHRYLPMTEEDKKEMLQTIGVQTIDELFSDIPESVRFKGDLKIKEAKSEPELLKELSQMASKNANLKEYASFLGAGVYDHYAPVIVDHVISRSEFYTAYTPYQPEISQGELQAIFEFQTMICELTGMDVANSSMYDGGTALAEAAMLAAGHTRKKKILVSSAVHPESRAVLETYAKGQNLEVVEINHKDGVTDLDVLQSEVDDTVACVIVQYPNFFGQVEKLADIEKIVHQQKSLFIVSSNPLSLGALTPPGKFGADIVIGDAQPFGIPTQFGGPHCGYFATTKAFMRKIPGRLVGQTVDSDGKRGFVLTLQAREQHIRRDKATSNICSNQALNALAASVAMTALGKQGVKEMARQNISKAQYAKRQFEAKGFTVTFAGPFFNEFVVDCKRPVKEVNDALLQKNIIGGYDLGRDYKEHENHMLVAVTELRTKEEIDTLVNEMGAIQ</sequence>
<name>GCSPA_BACC4</name>
<accession>B7HB99</accession>
<protein>
    <recommendedName>
        <fullName evidence="1">Probable glycine dehydrogenase (decarboxylating) subunit 1</fullName>
        <ecNumber evidence="1">1.4.4.2</ecNumber>
    </recommendedName>
    <alternativeName>
        <fullName evidence="1">Glycine cleavage system P-protein subunit 1</fullName>
    </alternativeName>
    <alternativeName>
        <fullName evidence="1">Glycine decarboxylase subunit 1</fullName>
    </alternativeName>
    <alternativeName>
        <fullName evidence="1">Glycine dehydrogenase (aminomethyl-transferring) subunit 1</fullName>
    </alternativeName>
</protein>
<dbReference type="EC" id="1.4.4.2" evidence="1"/>
<dbReference type="EMBL" id="CP001176">
    <property type="protein sequence ID" value="ACK63553.1"/>
    <property type="molecule type" value="Genomic_DNA"/>
</dbReference>
<dbReference type="RefSeq" id="WP_000903240.1">
    <property type="nucleotide sequence ID" value="NZ_VEHB01000002.1"/>
</dbReference>
<dbReference type="SMR" id="B7HB99"/>
<dbReference type="GeneID" id="72450911"/>
<dbReference type="KEGG" id="bcb:BCB4264_A4338"/>
<dbReference type="HOGENOM" id="CLU_004620_0_2_9"/>
<dbReference type="Proteomes" id="UP000007096">
    <property type="component" value="Chromosome"/>
</dbReference>
<dbReference type="GO" id="GO:0004375">
    <property type="term" value="F:glycine dehydrogenase (decarboxylating) activity"/>
    <property type="evidence" value="ECO:0007669"/>
    <property type="project" value="UniProtKB-EC"/>
</dbReference>
<dbReference type="GO" id="GO:0019464">
    <property type="term" value="P:glycine decarboxylation via glycine cleavage system"/>
    <property type="evidence" value="ECO:0007669"/>
    <property type="project" value="UniProtKB-UniRule"/>
</dbReference>
<dbReference type="GO" id="GO:0009116">
    <property type="term" value="P:nucleoside metabolic process"/>
    <property type="evidence" value="ECO:0007669"/>
    <property type="project" value="InterPro"/>
</dbReference>
<dbReference type="CDD" id="cd00613">
    <property type="entry name" value="GDC-P"/>
    <property type="match status" value="1"/>
</dbReference>
<dbReference type="FunFam" id="3.40.640.10:FF:000113">
    <property type="entry name" value="Probable glycine dehydrogenase (decarboxylating) subunit 1"/>
    <property type="match status" value="1"/>
</dbReference>
<dbReference type="Gene3D" id="3.90.1150.10">
    <property type="entry name" value="Aspartate Aminotransferase, domain 1"/>
    <property type="match status" value="1"/>
</dbReference>
<dbReference type="Gene3D" id="3.40.640.10">
    <property type="entry name" value="Type I PLP-dependent aspartate aminotransferase-like (Major domain)"/>
    <property type="match status" value="1"/>
</dbReference>
<dbReference type="HAMAP" id="MF_00712">
    <property type="entry name" value="GcvPA"/>
    <property type="match status" value="1"/>
</dbReference>
<dbReference type="InterPro" id="IPR023010">
    <property type="entry name" value="GcvPA"/>
</dbReference>
<dbReference type="InterPro" id="IPR049315">
    <property type="entry name" value="GDC-P_N"/>
</dbReference>
<dbReference type="InterPro" id="IPR020581">
    <property type="entry name" value="GDC_P"/>
</dbReference>
<dbReference type="InterPro" id="IPR015424">
    <property type="entry name" value="PyrdxlP-dep_Trfase"/>
</dbReference>
<dbReference type="InterPro" id="IPR015421">
    <property type="entry name" value="PyrdxlP-dep_Trfase_major"/>
</dbReference>
<dbReference type="InterPro" id="IPR015422">
    <property type="entry name" value="PyrdxlP-dep_Trfase_small"/>
</dbReference>
<dbReference type="NCBIfam" id="NF001696">
    <property type="entry name" value="PRK00451.1"/>
    <property type="match status" value="1"/>
</dbReference>
<dbReference type="PANTHER" id="PTHR42806">
    <property type="entry name" value="GLYCINE CLEAVAGE SYSTEM P-PROTEIN"/>
    <property type="match status" value="1"/>
</dbReference>
<dbReference type="PANTHER" id="PTHR42806:SF1">
    <property type="entry name" value="GLYCINE DEHYDROGENASE (DECARBOXYLATING)"/>
    <property type="match status" value="1"/>
</dbReference>
<dbReference type="Pfam" id="PF02347">
    <property type="entry name" value="GDC-P"/>
    <property type="match status" value="1"/>
</dbReference>
<dbReference type="PIRSF" id="PIRSF006815">
    <property type="entry name" value="GcvPA"/>
    <property type="match status" value="1"/>
</dbReference>
<dbReference type="SUPFAM" id="SSF53383">
    <property type="entry name" value="PLP-dependent transferases"/>
    <property type="match status" value="1"/>
</dbReference>